<feature type="chain" id="PRO_0000415331" description="Mechanosensitive ion channel protein 9">
    <location>
        <begin position="1"/>
        <end position="742"/>
    </location>
</feature>
<feature type="transmembrane region" description="Helical" evidence="2">
    <location>
        <begin position="180"/>
        <end position="200"/>
    </location>
</feature>
<feature type="transmembrane region" description="Helical" evidence="2">
    <location>
        <begin position="221"/>
        <end position="241"/>
    </location>
</feature>
<feature type="transmembrane region" description="Helical" evidence="2">
    <location>
        <begin position="261"/>
        <end position="281"/>
    </location>
</feature>
<feature type="transmembrane region" description="Helical" evidence="2">
    <location>
        <begin position="292"/>
        <end position="312"/>
    </location>
</feature>
<feature type="transmembrane region" description="Helical" evidence="2">
    <location>
        <begin position="524"/>
        <end position="544"/>
    </location>
</feature>
<feature type="transmembrane region" description="Helical" evidence="2">
    <location>
        <begin position="559"/>
        <end position="579"/>
    </location>
</feature>
<feature type="region of interest" description="Disordered" evidence="3">
    <location>
        <begin position="1"/>
        <end position="117"/>
    </location>
</feature>
<feature type="compositionally biased region" description="Basic and acidic residues" evidence="3">
    <location>
        <begin position="17"/>
        <end position="26"/>
    </location>
</feature>
<feature type="compositionally biased region" description="Basic and acidic residues" evidence="3">
    <location>
        <begin position="105"/>
        <end position="117"/>
    </location>
</feature>
<feature type="modified residue" description="Phosphoserine" evidence="7">
    <location>
        <position position="28"/>
    </location>
</feature>
<feature type="modified residue" description="Phosphoserine" evidence="7">
    <location>
        <position position="36"/>
    </location>
</feature>
<feature type="modified residue" description="Phosphoserine" evidence="1">
    <location>
        <position position="142"/>
    </location>
</feature>
<feature type="modified residue" description="Phosphoserine" evidence="1">
    <location>
        <position position="145"/>
    </location>
</feature>
<accession>Q84M97</accession>
<gene>
    <name type="primary">MSL9</name>
    <name type="ordered locus">At5g19520</name>
    <name type="ORF">T20D1.40</name>
</gene>
<keyword id="KW-1003">Cell membrane</keyword>
<keyword id="KW-0407">Ion channel</keyword>
<keyword id="KW-0406">Ion transport</keyword>
<keyword id="KW-0472">Membrane</keyword>
<keyword id="KW-0597">Phosphoprotein</keyword>
<keyword id="KW-1185">Reference proteome</keyword>
<keyword id="KW-0812">Transmembrane</keyword>
<keyword id="KW-1133">Transmembrane helix</keyword>
<keyword id="KW-0813">Transport</keyword>
<name>MSL9_ARATH</name>
<evidence type="ECO:0000250" key="1">
    <source>
        <dbReference type="UniProtKB" id="Q9LYG9"/>
    </source>
</evidence>
<evidence type="ECO:0000255" key="2"/>
<evidence type="ECO:0000256" key="3">
    <source>
        <dbReference type="SAM" id="MobiDB-lite"/>
    </source>
</evidence>
<evidence type="ECO:0000269" key="4">
    <source>
    </source>
</evidence>
<evidence type="ECO:0000269" key="5">
    <source>
    </source>
</evidence>
<evidence type="ECO:0000305" key="6"/>
<evidence type="ECO:0007744" key="7">
    <source>
    </source>
</evidence>
<sequence length="742" mass="84249">MAERRVSNGEEVVINVSDKEDSKDPRASPSFNPLASPDSDAGIEKSKPVPPISIPTPEIYKFSGSVHKPPKIPSPEGLVRRKSLSRSIYSKPKSRFGEQQSFRYDSTREENGGRSLREQFGAGSFARGSFDRASPNNKSNRSVASAALSKVAEEEPDENEEIYKKVKLHRVKRSGMKPLAFLELVVFMAILGALIVSLTIDVVNKHTIWGLEFWKWCVLVMVTLSGMLVTNWFMHFVVFIIEKNYLLRKKVLYFVHGLKKNVQVFIWFSLVLIAWICLFDGDVKRTRKTKRFLDFITWTIVSLLVGSILFLVKTFALKVLASKFNVRNFFERIQESVFHQYVLQTLSGPPLIEEAENVGRVPSTGHLSFTRTKDGKVKDKKVIDMGKVHRMKQEKVSAWTMRVLIEAVGTSGISTISSTLDEVNNKKERTDKEITNEMEAVAAAYDVFNNVAKPNHNYIEEDDLLRFMIKEEVDLVLPLIEDADTGKITRKTFTEWVVNVYTSRKTIGHSLNDTKTAVKQLDKLITGILTVITFIVWMVLLDIASTKLLLVFSSQFLGLAFMIGSTCKNIFESFMFVFVMHPYDVGDRCVVDGVMLLVEEIDLLTTVFLKIDNEKVFYPNSVLISKPISNFYRSPDMGDYVDFGIAFSTPAEKIGCLKGKIGEYLVANSQHWYPEAQVMVRAIENMNKLVLNILVQHTINFQVYVEKSLRRTALIIAIKRILEDLEIDYTLLPQDVNLTGHK</sequence>
<organism>
    <name type="scientific">Arabidopsis thaliana</name>
    <name type="common">Mouse-ear cress</name>
    <dbReference type="NCBI Taxonomy" id="3702"/>
    <lineage>
        <taxon>Eukaryota</taxon>
        <taxon>Viridiplantae</taxon>
        <taxon>Streptophyta</taxon>
        <taxon>Embryophyta</taxon>
        <taxon>Tracheophyta</taxon>
        <taxon>Spermatophyta</taxon>
        <taxon>Magnoliopsida</taxon>
        <taxon>eudicotyledons</taxon>
        <taxon>Gunneridae</taxon>
        <taxon>Pentapetalae</taxon>
        <taxon>rosids</taxon>
        <taxon>malvids</taxon>
        <taxon>Brassicales</taxon>
        <taxon>Brassicaceae</taxon>
        <taxon>Camelineae</taxon>
        <taxon>Arabidopsis</taxon>
    </lineage>
</organism>
<proteinExistence type="evidence at protein level"/>
<reference key="1">
    <citation type="journal article" date="2000" name="Nature">
        <title>Sequence and analysis of chromosome 5 of the plant Arabidopsis thaliana.</title>
        <authorList>
            <person name="Tabata S."/>
            <person name="Kaneko T."/>
            <person name="Nakamura Y."/>
            <person name="Kotani H."/>
            <person name="Kato T."/>
            <person name="Asamizu E."/>
            <person name="Miyajima N."/>
            <person name="Sasamoto S."/>
            <person name="Kimura T."/>
            <person name="Hosouchi T."/>
            <person name="Kawashima K."/>
            <person name="Kohara M."/>
            <person name="Matsumoto M."/>
            <person name="Matsuno A."/>
            <person name="Muraki A."/>
            <person name="Nakayama S."/>
            <person name="Nakazaki N."/>
            <person name="Naruo K."/>
            <person name="Okumura S."/>
            <person name="Shinpo S."/>
            <person name="Takeuchi C."/>
            <person name="Wada T."/>
            <person name="Watanabe A."/>
            <person name="Yamada M."/>
            <person name="Yasuda M."/>
            <person name="Sato S."/>
            <person name="de la Bastide M."/>
            <person name="Huang E."/>
            <person name="Spiegel L."/>
            <person name="Gnoj L."/>
            <person name="O'Shaughnessy A."/>
            <person name="Preston R."/>
            <person name="Habermann K."/>
            <person name="Murray J."/>
            <person name="Johnson D."/>
            <person name="Rohlfing T."/>
            <person name="Nelson J."/>
            <person name="Stoneking T."/>
            <person name="Pepin K."/>
            <person name="Spieth J."/>
            <person name="Sekhon M."/>
            <person name="Armstrong J."/>
            <person name="Becker M."/>
            <person name="Belter E."/>
            <person name="Cordum H."/>
            <person name="Cordes M."/>
            <person name="Courtney L."/>
            <person name="Courtney W."/>
            <person name="Dante M."/>
            <person name="Du H."/>
            <person name="Edwards J."/>
            <person name="Fryman J."/>
            <person name="Haakensen B."/>
            <person name="Lamar E."/>
            <person name="Latreille P."/>
            <person name="Leonard S."/>
            <person name="Meyer R."/>
            <person name="Mulvaney E."/>
            <person name="Ozersky P."/>
            <person name="Riley A."/>
            <person name="Strowmatt C."/>
            <person name="Wagner-McPherson C."/>
            <person name="Wollam A."/>
            <person name="Yoakum M."/>
            <person name="Bell M."/>
            <person name="Dedhia N."/>
            <person name="Parnell L."/>
            <person name="Shah R."/>
            <person name="Rodriguez M."/>
            <person name="Hoon See L."/>
            <person name="Vil D."/>
            <person name="Baker J."/>
            <person name="Kirchoff K."/>
            <person name="Toth K."/>
            <person name="King L."/>
            <person name="Bahret A."/>
            <person name="Miller B."/>
            <person name="Marra M.A."/>
            <person name="Martienssen R."/>
            <person name="McCombie W.R."/>
            <person name="Wilson R.K."/>
            <person name="Murphy G."/>
            <person name="Bancroft I."/>
            <person name="Volckaert G."/>
            <person name="Wambutt R."/>
            <person name="Duesterhoeft A."/>
            <person name="Stiekema W."/>
            <person name="Pohl T."/>
            <person name="Entian K.-D."/>
            <person name="Terryn N."/>
            <person name="Hartley N."/>
            <person name="Bent E."/>
            <person name="Johnson S."/>
            <person name="Langham S.-A."/>
            <person name="McCullagh B."/>
            <person name="Robben J."/>
            <person name="Grymonprez B."/>
            <person name="Zimmermann W."/>
            <person name="Ramsperger U."/>
            <person name="Wedler H."/>
            <person name="Balke K."/>
            <person name="Wedler E."/>
            <person name="Peters S."/>
            <person name="van Staveren M."/>
            <person name="Dirkse W."/>
            <person name="Mooijman P."/>
            <person name="Klein Lankhorst R."/>
            <person name="Weitzenegger T."/>
            <person name="Bothe G."/>
            <person name="Rose M."/>
            <person name="Hauf J."/>
            <person name="Berneiser S."/>
            <person name="Hempel S."/>
            <person name="Feldpausch M."/>
            <person name="Lamberth S."/>
            <person name="Villarroel R."/>
            <person name="Gielen J."/>
            <person name="Ardiles W."/>
            <person name="Bents O."/>
            <person name="Lemcke K."/>
            <person name="Kolesov G."/>
            <person name="Mayer K.F.X."/>
            <person name="Rudd S."/>
            <person name="Schoof H."/>
            <person name="Schueller C."/>
            <person name="Zaccaria P."/>
            <person name="Mewes H.-W."/>
            <person name="Bevan M."/>
            <person name="Fransz P.F."/>
        </authorList>
    </citation>
    <scope>NUCLEOTIDE SEQUENCE [LARGE SCALE GENOMIC DNA]</scope>
    <source>
        <strain>cv. Columbia</strain>
    </source>
</reference>
<reference key="2">
    <citation type="journal article" date="2017" name="Plant J.">
        <title>Araport11: a complete reannotation of the Arabidopsis thaliana reference genome.</title>
        <authorList>
            <person name="Cheng C.Y."/>
            <person name="Krishnakumar V."/>
            <person name="Chan A.P."/>
            <person name="Thibaud-Nissen F."/>
            <person name="Schobel S."/>
            <person name="Town C.D."/>
        </authorList>
    </citation>
    <scope>GENOME REANNOTATION</scope>
    <source>
        <strain>cv. Columbia</strain>
    </source>
</reference>
<reference key="3">
    <citation type="journal article" date="2003" name="Science">
        <title>Empirical analysis of transcriptional activity in the Arabidopsis genome.</title>
        <authorList>
            <person name="Yamada K."/>
            <person name="Lim J."/>
            <person name="Dale J.M."/>
            <person name="Chen H."/>
            <person name="Shinn P."/>
            <person name="Palm C.J."/>
            <person name="Southwick A.M."/>
            <person name="Wu H.C."/>
            <person name="Kim C.J."/>
            <person name="Nguyen M."/>
            <person name="Pham P.K."/>
            <person name="Cheuk R.F."/>
            <person name="Karlin-Newmann G."/>
            <person name="Liu S.X."/>
            <person name="Lam B."/>
            <person name="Sakano H."/>
            <person name="Wu T."/>
            <person name="Yu G."/>
            <person name="Miranda M."/>
            <person name="Quach H.L."/>
            <person name="Tripp M."/>
            <person name="Chang C.H."/>
            <person name="Lee J.M."/>
            <person name="Toriumi M.J."/>
            <person name="Chan M.M."/>
            <person name="Tang C.C."/>
            <person name="Onodera C.S."/>
            <person name="Deng J.M."/>
            <person name="Akiyama K."/>
            <person name="Ansari Y."/>
            <person name="Arakawa T."/>
            <person name="Banh J."/>
            <person name="Banno F."/>
            <person name="Bowser L."/>
            <person name="Brooks S.Y."/>
            <person name="Carninci P."/>
            <person name="Chao Q."/>
            <person name="Choy N."/>
            <person name="Enju A."/>
            <person name="Goldsmith A.D."/>
            <person name="Gurjal M."/>
            <person name="Hansen N.F."/>
            <person name="Hayashizaki Y."/>
            <person name="Johnson-Hopson C."/>
            <person name="Hsuan V.W."/>
            <person name="Iida K."/>
            <person name="Karnes M."/>
            <person name="Khan S."/>
            <person name="Koesema E."/>
            <person name="Ishida J."/>
            <person name="Jiang P.X."/>
            <person name="Jones T."/>
            <person name="Kawai J."/>
            <person name="Kamiya A."/>
            <person name="Meyers C."/>
            <person name="Nakajima M."/>
            <person name="Narusaka M."/>
            <person name="Seki M."/>
            <person name="Sakurai T."/>
            <person name="Satou M."/>
            <person name="Tamse R."/>
            <person name="Vaysberg M."/>
            <person name="Wallender E.K."/>
            <person name="Wong C."/>
            <person name="Yamamura Y."/>
            <person name="Yuan S."/>
            <person name="Shinozaki K."/>
            <person name="Davis R.W."/>
            <person name="Theologis A."/>
            <person name="Ecker J.R."/>
        </authorList>
    </citation>
    <scope>NUCLEOTIDE SEQUENCE [LARGE SCALE MRNA]</scope>
    <source>
        <strain>cv. Columbia</strain>
    </source>
</reference>
<reference key="4">
    <citation type="submission" date="2006-07" db="EMBL/GenBank/DDBJ databases">
        <title>Large-scale analysis of RIKEN Arabidopsis full-length (RAFL) cDNAs.</title>
        <authorList>
            <person name="Totoki Y."/>
            <person name="Seki M."/>
            <person name="Ishida J."/>
            <person name="Nakajima M."/>
            <person name="Enju A."/>
            <person name="Kamiya A."/>
            <person name="Narusaka M."/>
            <person name="Shin-i T."/>
            <person name="Nakagawa M."/>
            <person name="Sakamoto N."/>
            <person name="Oishi K."/>
            <person name="Kohara Y."/>
            <person name="Kobayashi M."/>
            <person name="Toyoda A."/>
            <person name="Sakaki Y."/>
            <person name="Sakurai T."/>
            <person name="Iida K."/>
            <person name="Akiyama K."/>
            <person name="Satou M."/>
            <person name="Toyoda T."/>
            <person name="Konagaya A."/>
            <person name="Carninci P."/>
            <person name="Kawai J."/>
            <person name="Hayashizaki Y."/>
            <person name="Shinozaki K."/>
        </authorList>
    </citation>
    <scope>NUCLEOTIDE SEQUENCE [LARGE SCALE MRNA]</scope>
    <source>
        <strain>cv. Columbia</strain>
    </source>
</reference>
<reference key="5">
    <citation type="journal article" date="2003" name="Microbiol. Mol. Biol. Rev.">
        <title>Two families of mechanosensitive channel proteins.</title>
        <authorList>
            <person name="Pivetti C.D."/>
            <person name="Yen M.R."/>
            <person name="Miller S."/>
            <person name="Busch W."/>
            <person name="Tseng Y.H."/>
            <person name="Booth I.R."/>
            <person name="Saier M.H. Jr."/>
        </authorList>
    </citation>
    <scope>GENE FAMILY</scope>
</reference>
<reference key="6">
    <citation type="book" date="2007" name="Mechanosensitive Ion Channels, Part A">
        <title>MscS-like proteins in plants.</title>
        <editorList>
            <person name="Hamill O.P."/>
        </editorList>
        <authorList>
            <person name="Haswell E.S."/>
        </authorList>
    </citation>
    <scope>REVIEW</scope>
    <scope>GENE FAMILY</scope>
    <scope>NOMENCLATURE</scope>
</reference>
<reference key="7">
    <citation type="journal article" date="2008" name="Curr. Biol.">
        <title>Two MscS homologs provide mechanosensitive channel activities in the Arabidopsis root.</title>
        <authorList>
            <person name="Haswell E.S."/>
            <person name="Peyronnet R."/>
            <person name="Barbier-Brygoo H."/>
            <person name="Meyerowitz E.M."/>
            <person name="Frachisse J.M."/>
        </authorList>
    </citation>
    <scope>FUNCTION</scope>
    <scope>TISSUE SPECIFICITY</scope>
    <scope>SUBCELLULAR LOCATION</scope>
</reference>
<reference key="8">
    <citation type="journal article" date="2008" name="J. Proteome Res.">
        <title>Site-specific phosphorylation profiling of Arabidopsis proteins by mass spectrometry and peptide chip analysis.</title>
        <authorList>
            <person name="de la Fuente van Bentem S."/>
            <person name="Anrather D."/>
            <person name="Dohnal I."/>
            <person name="Roitinger E."/>
            <person name="Csaszar E."/>
            <person name="Joore J."/>
            <person name="Buijnink J."/>
            <person name="Carreri A."/>
            <person name="Forzani C."/>
            <person name="Lorkovic Z.J."/>
            <person name="Barta A."/>
            <person name="Lecourieux D."/>
            <person name="Verhounig A."/>
            <person name="Jonak C."/>
            <person name="Hirt H."/>
        </authorList>
    </citation>
    <scope>PHOSPHORYLATION [LARGE SCALE ANALYSIS] AT SER-28 AND SER-36</scope>
    <scope>IDENTIFICATION BY MASS SPECTROMETRY [LARGE SCALE ANALYSIS]</scope>
    <source>
        <tissue>Root</tissue>
    </source>
</reference>
<reference key="9">
    <citation type="journal article" date="2008" name="Plant Signal. Behav.">
        <title>AtMSL9 and AtMSL10: Sensors of plasma membrane tension in Arabidopsis roots.</title>
        <authorList>
            <person name="Peyronnet R."/>
            <person name="Haswell E.S."/>
            <person name="Barbier-Brygoo H."/>
            <person name="Frachisse J.M."/>
        </authorList>
    </citation>
    <scope>FUNCTION</scope>
</reference>
<dbReference type="EMBL" id="AF296830">
    <property type="status" value="NOT_ANNOTATED_CDS"/>
    <property type="molecule type" value="Genomic_DNA"/>
</dbReference>
<dbReference type="EMBL" id="CP002688">
    <property type="protein sequence ID" value="AED92720.1"/>
    <property type="molecule type" value="Genomic_DNA"/>
</dbReference>
<dbReference type="EMBL" id="CP002688">
    <property type="protein sequence ID" value="ANM69951.1"/>
    <property type="molecule type" value="Genomic_DNA"/>
</dbReference>
<dbReference type="EMBL" id="BT006457">
    <property type="protein sequence ID" value="AAP21265.1"/>
    <property type="molecule type" value="mRNA"/>
</dbReference>
<dbReference type="EMBL" id="AK228195">
    <property type="protein sequence ID" value="BAF00149.1"/>
    <property type="molecule type" value="mRNA"/>
</dbReference>
<dbReference type="RefSeq" id="NP_001331595.1">
    <property type="nucleotide sequence ID" value="NM_001343609.1"/>
</dbReference>
<dbReference type="RefSeq" id="NP_197453.1">
    <property type="nucleotide sequence ID" value="NM_121957.4"/>
</dbReference>
<dbReference type="SMR" id="Q84M97"/>
<dbReference type="BioGRID" id="17348">
    <property type="interactions" value="2"/>
</dbReference>
<dbReference type="FunCoup" id="Q84M97">
    <property type="interactions" value="229"/>
</dbReference>
<dbReference type="STRING" id="3702.Q84M97"/>
<dbReference type="iPTMnet" id="Q84M97"/>
<dbReference type="PaxDb" id="3702-AT5G19520.1"/>
<dbReference type="ProteomicsDB" id="250960"/>
<dbReference type="EnsemblPlants" id="AT5G19520.1">
    <property type="protein sequence ID" value="AT5G19520.1"/>
    <property type="gene ID" value="AT5G19520"/>
</dbReference>
<dbReference type="EnsemblPlants" id="AT5G19520.2">
    <property type="protein sequence ID" value="AT5G19520.2"/>
    <property type="gene ID" value="AT5G19520"/>
</dbReference>
<dbReference type="GeneID" id="832072"/>
<dbReference type="Gramene" id="AT5G19520.1">
    <property type="protein sequence ID" value="AT5G19520.1"/>
    <property type="gene ID" value="AT5G19520"/>
</dbReference>
<dbReference type="Gramene" id="AT5G19520.2">
    <property type="protein sequence ID" value="AT5G19520.2"/>
    <property type="gene ID" value="AT5G19520"/>
</dbReference>
<dbReference type="KEGG" id="ath:AT5G19520"/>
<dbReference type="Araport" id="AT5G19520"/>
<dbReference type="TAIR" id="AT5G19520">
    <property type="gene designation" value="MSL9"/>
</dbReference>
<dbReference type="eggNOG" id="KOG4629">
    <property type="taxonomic scope" value="Eukaryota"/>
</dbReference>
<dbReference type="HOGENOM" id="CLU_013552_1_0_1"/>
<dbReference type="InParanoid" id="Q84M97"/>
<dbReference type="OMA" id="WIFLFEE"/>
<dbReference type="PhylomeDB" id="Q84M97"/>
<dbReference type="PRO" id="PR:Q84M97"/>
<dbReference type="Proteomes" id="UP000006548">
    <property type="component" value="Chromosome 5"/>
</dbReference>
<dbReference type="ExpressionAtlas" id="Q84M97">
    <property type="expression patterns" value="baseline and differential"/>
</dbReference>
<dbReference type="GO" id="GO:0005886">
    <property type="term" value="C:plasma membrane"/>
    <property type="evidence" value="ECO:0000314"/>
    <property type="project" value="TAIR"/>
</dbReference>
<dbReference type="GO" id="GO:0008381">
    <property type="term" value="F:mechanosensitive monoatomic ion channel activity"/>
    <property type="evidence" value="ECO:0000315"/>
    <property type="project" value="TAIR"/>
</dbReference>
<dbReference type="GO" id="GO:0050982">
    <property type="term" value="P:detection of mechanical stimulus"/>
    <property type="evidence" value="ECO:0000315"/>
    <property type="project" value="TAIR"/>
</dbReference>
<dbReference type="FunFam" id="2.30.30.60:FF:000003">
    <property type="entry name" value="Predicted mechanosensitive ion channel"/>
    <property type="match status" value="1"/>
</dbReference>
<dbReference type="Gene3D" id="2.30.30.60">
    <property type="match status" value="1"/>
</dbReference>
<dbReference type="InterPro" id="IPR010920">
    <property type="entry name" value="LSM_dom_sf"/>
</dbReference>
<dbReference type="InterPro" id="IPR016688">
    <property type="entry name" value="MscS-like_plants/fungi"/>
</dbReference>
<dbReference type="InterPro" id="IPR023408">
    <property type="entry name" value="MscS_beta-dom_sf"/>
</dbReference>
<dbReference type="InterPro" id="IPR006685">
    <property type="entry name" value="MscS_channel_2nd"/>
</dbReference>
<dbReference type="PANTHER" id="PTHR31618">
    <property type="entry name" value="MECHANOSENSITIVE ION CHANNEL PROTEIN 5"/>
    <property type="match status" value="1"/>
</dbReference>
<dbReference type="PANTHER" id="PTHR31618:SF17">
    <property type="entry name" value="MECHANOSENSITIVE ION CHANNEL PROTEIN 9"/>
    <property type="match status" value="1"/>
</dbReference>
<dbReference type="Pfam" id="PF00924">
    <property type="entry name" value="MS_channel_2nd"/>
    <property type="match status" value="1"/>
</dbReference>
<dbReference type="PIRSF" id="PIRSF017209">
    <property type="entry name" value="Memb_At2g17000_prd"/>
    <property type="match status" value="1"/>
</dbReference>
<dbReference type="SUPFAM" id="SSF50182">
    <property type="entry name" value="Sm-like ribonucleoproteins"/>
    <property type="match status" value="1"/>
</dbReference>
<comment type="function">
    <text evidence="4 5">Mechanosensitive channel that opens in response to stretch forces in the membrane lipid bilayer.</text>
</comment>
<comment type="subcellular location">
    <subcellularLocation>
        <location evidence="4">Cell membrane</location>
        <topology evidence="4">Multi-pass membrane protein</topology>
    </subcellularLocation>
</comment>
<comment type="tissue specificity">
    <text evidence="4">Detected in the epidermis, cortex, and endodermis of the root tip.</text>
</comment>
<comment type="similarity">
    <text evidence="6">Belongs to the MscS (TC 1.A.23) family.</text>
</comment>
<protein>
    <recommendedName>
        <fullName>Mechanosensitive ion channel protein 9</fullName>
    </recommendedName>
    <alternativeName>
        <fullName>Mechanosensitive channel of small conductance-like 9</fullName>
    </alternativeName>
    <alternativeName>
        <fullName>MscS-Like protein 9</fullName>
        <shortName>AtMSL9</shortName>
    </alternativeName>
</protein>